<keyword id="KW-1185">Reference proteome</keyword>
<keyword id="KW-0687">Ribonucleoprotein</keyword>
<keyword id="KW-0689">Ribosomal protein</keyword>
<keyword id="KW-0694">RNA-binding</keyword>
<keyword id="KW-0699">rRNA-binding</keyword>
<accession>A4VI57</accession>
<evidence type="ECO:0000255" key="1">
    <source>
        <dbReference type="HAMAP-Rule" id="MF_00500"/>
    </source>
</evidence>
<evidence type="ECO:0000256" key="2">
    <source>
        <dbReference type="SAM" id="MobiDB-lite"/>
    </source>
</evidence>
<evidence type="ECO:0000305" key="3"/>
<comment type="function">
    <text evidence="1">Binds directly to 16S ribosomal RNA.</text>
</comment>
<comment type="similarity">
    <text evidence="1">Belongs to the bacterial ribosomal protein bS20 family.</text>
</comment>
<sequence>MANSPSAKKRAIQAEKRRSHNASLRSMVRTYIKNVVKAIDAKDLDKARAAYTAAVPVIDRMADKGIIHKNKAARHKSRLNGHIKALGEAAAA</sequence>
<proteinExistence type="inferred from homology"/>
<organism>
    <name type="scientific">Stutzerimonas stutzeri (strain A1501)</name>
    <name type="common">Pseudomonas stutzeri</name>
    <dbReference type="NCBI Taxonomy" id="379731"/>
    <lineage>
        <taxon>Bacteria</taxon>
        <taxon>Pseudomonadati</taxon>
        <taxon>Pseudomonadota</taxon>
        <taxon>Gammaproteobacteria</taxon>
        <taxon>Pseudomonadales</taxon>
        <taxon>Pseudomonadaceae</taxon>
        <taxon>Stutzerimonas</taxon>
    </lineage>
</organism>
<protein>
    <recommendedName>
        <fullName evidence="1">Small ribosomal subunit protein bS20</fullName>
    </recommendedName>
    <alternativeName>
        <fullName evidence="3">30S ribosomal protein S20</fullName>
    </alternativeName>
</protein>
<dbReference type="EMBL" id="CP000304">
    <property type="protein sequence ID" value="ABP78658.1"/>
    <property type="molecule type" value="Genomic_DNA"/>
</dbReference>
<dbReference type="RefSeq" id="WP_003288018.1">
    <property type="nucleotide sequence ID" value="NC_009434.1"/>
</dbReference>
<dbReference type="SMR" id="A4VI57"/>
<dbReference type="GeneID" id="75213549"/>
<dbReference type="KEGG" id="psa:PST_0961"/>
<dbReference type="eggNOG" id="COG0268">
    <property type="taxonomic scope" value="Bacteria"/>
</dbReference>
<dbReference type="HOGENOM" id="CLU_160655_4_0_6"/>
<dbReference type="Proteomes" id="UP000000233">
    <property type="component" value="Chromosome"/>
</dbReference>
<dbReference type="GO" id="GO:0005829">
    <property type="term" value="C:cytosol"/>
    <property type="evidence" value="ECO:0007669"/>
    <property type="project" value="TreeGrafter"/>
</dbReference>
<dbReference type="GO" id="GO:0015935">
    <property type="term" value="C:small ribosomal subunit"/>
    <property type="evidence" value="ECO:0007669"/>
    <property type="project" value="TreeGrafter"/>
</dbReference>
<dbReference type="GO" id="GO:0070181">
    <property type="term" value="F:small ribosomal subunit rRNA binding"/>
    <property type="evidence" value="ECO:0007669"/>
    <property type="project" value="TreeGrafter"/>
</dbReference>
<dbReference type="GO" id="GO:0003735">
    <property type="term" value="F:structural constituent of ribosome"/>
    <property type="evidence" value="ECO:0007669"/>
    <property type="project" value="InterPro"/>
</dbReference>
<dbReference type="GO" id="GO:0006412">
    <property type="term" value="P:translation"/>
    <property type="evidence" value="ECO:0007669"/>
    <property type="project" value="UniProtKB-UniRule"/>
</dbReference>
<dbReference type="FunFam" id="1.20.58.110:FF:000001">
    <property type="entry name" value="30S ribosomal protein S20"/>
    <property type="match status" value="1"/>
</dbReference>
<dbReference type="Gene3D" id="1.20.58.110">
    <property type="entry name" value="Ribosomal protein S20"/>
    <property type="match status" value="1"/>
</dbReference>
<dbReference type="HAMAP" id="MF_00500">
    <property type="entry name" value="Ribosomal_bS20"/>
    <property type="match status" value="1"/>
</dbReference>
<dbReference type="InterPro" id="IPR002583">
    <property type="entry name" value="Ribosomal_bS20"/>
</dbReference>
<dbReference type="InterPro" id="IPR036510">
    <property type="entry name" value="Ribosomal_bS20_sf"/>
</dbReference>
<dbReference type="NCBIfam" id="TIGR00029">
    <property type="entry name" value="S20"/>
    <property type="match status" value="1"/>
</dbReference>
<dbReference type="PANTHER" id="PTHR33398">
    <property type="entry name" value="30S RIBOSOMAL PROTEIN S20"/>
    <property type="match status" value="1"/>
</dbReference>
<dbReference type="PANTHER" id="PTHR33398:SF1">
    <property type="entry name" value="SMALL RIBOSOMAL SUBUNIT PROTEIN BS20C"/>
    <property type="match status" value="1"/>
</dbReference>
<dbReference type="Pfam" id="PF01649">
    <property type="entry name" value="Ribosomal_S20p"/>
    <property type="match status" value="1"/>
</dbReference>
<dbReference type="SUPFAM" id="SSF46992">
    <property type="entry name" value="Ribosomal protein S20"/>
    <property type="match status" value="1"/>
</dbReference>
<reference key="1">
    <citation type="journal article" date="2008" name="Proc. Natl. Acad. Sci. U.S.A.">
        <title>Nitrogen fixation island and rhizosphere competence traits in the genome of root-associated Pseudomonas stutzeri A1501.</title>
        <authorList>
            <person name="Yan Y."/>
            <person name="Yang J."/>
            <person name="Dou Y."/>
            <person name="Chen M."/>
            <person name="Ping S."/>
            <person name="Peng J."/>
            <person name="Lu W."/>
            <person name="Zhang W."/>
            <person name="Yao Z."/>
            <person name="Li H."/>
            <person name="Liu W."/>
            <person name="He S."/>
            <person name="Geng L."/>
            <person name="Zhang X."/>
            <person name="Yang F."/>
            <person name="Yu H."/>
            <person name="Zhan Y."/>
            <person name="Li D."/>
            <person name="Lin Z."/>
            <person name="Wang Y."/>
            <person name="Elmerich C."/>
            <person name="Lin M."/>
            <person name="Jin Q."/>
        </authorList>
    </citation>
    <scope>NUCLEOTIDE SEQUENCE [LARGE SCALE GENOMIC DNA]</scope>
    <source>
        <strain>A1501</strain>
    </source>
</reference>
<name>RS20_STUS1</name>
<feature type="chain" id="PRO_1000014635" description="Small ribosomal subunit protein bS20">
    <location>
        <begin position="1"/>
        <end position="92"/>
    </location>
</feature>
<feature type="region of interest" description="Disordered" evidence="2">
    <location>
        <begin position="1"/>
        <end position="23"/>
    </location>
</feature>
<gene>
    <name evidence="1" type="primary">rpsT</name>
    <name type="ordered locus">PST_0961</name>
</gene>